<accession>Q3B6F6</accession>
<sequence>MGQKVNPTGFRLGIIKDWTSRWYDDSPVISGKIKEDHVIRNYVQTRLKREKAGIARIIIERTTKHIKINIYAARPGAVVGRKGEEINNLSQELGRITGKEVKIDVVEVVKPEIESQLIGESIAYQLENRVSFRRAMKMAIQQAMRAGAEGVRIRCAGRLGGAEIARAEQYKEGKIPLHTIRANVDYASVTAHTIAGTIGIKVWVYKGEVLNQRIDAIEEEEMKRIKERRSDSGPRSRNDRSQKRRRRPNDRG</sequence>
<name>RS3_CHLL3</name>
<protein>
    <recommendedName>
        <fullName evidence="1">Small ribosomal subunit protein uS3</fullName>
    </recommendedName>
    <alternativeName>
        <fullName evidence="3">30S ribosomal protein S3</fullName>
    </alternativeName>
</protein>
<reference key="1">
    <citation type="submission" date="2005-08" db="EMBL/GenBank/DDBJ databases">
        <title>Complete sequence of Pelodictyon luteolum DSM 273.</title>
        <authorList>
            <consortium name="US DOE Joint Genome Institute"/>
            <person name="Copeland A."/>
            <person name="Lucas S."/>
            <person name="Lapidus A."/>
            <person name="Barry K."/>
            <person name="Detter J.C."/>
            <person name="Glavina T."/>
            <person name="Hammon N."/>
            <person name="Israni S."/>
            <person name="Pitluck S."/>
            <person name="Bryant D."/>
            <person name="Schmutz J."/>
            <person name="Larimer F."/>
            <person name="Land M."/>
            <person name="Kyrpides N."/>
            <person name="Ivanova N."/>
            <person name="Richardson P."/>
        </authorList>
    </citation>
    <scope>NUCLEOTIDE SEQUENCE [LARGE SCALE GENOMIC DNA]</scope>
    <source>
        <strain>DSM 273 / BCRC 81028 / 2530</strain>
    </source>
</reference>
<gene>
    <name evidence="1" type="primary">rpsC</name>
    <name type="ordered locus">Plut_0187</name>
</gene>
<comment type="function">
    <text evidence="1">Binds the lower part of the 30S subunit head. Binds mRNA in the 70S ribosome, positioning it for translation.</text>
</comment>
<comment type="subunit">
    <text evidence="1">Part of the 30S ribosomal subunit. Forms a tight complex with proteins S10 and S14.</text>
</comment>
<comment type="similarity">
    <text evidence="1">Belongs to the universal ribosomal protein uS3 family.</text>
</comment>
<keyword id="KW-1185">Reference proteome</keyword>
<keyword id="KW-0687">Ribonucleoprotein</keyword>
<keyword id="KW-0689">Ribosomal protein</keyword>
<keyword id="KW-0694">RNA-binding</keyword>
<keyword id="KW-0699">rRNA-binding</keyword>
<organism>
    <name type="scientific">Chlorobium luteolum (strain DSM 273 / BCRC 81028 / 2530)</name>
    <name type="common">Pelodictyon luteolum</name>
    <dbReference type="NCBI Taxonomy" id="319225"/>
    <lineage>
        <taxon>Bacteria</taxon>
        <taxon>Pseudomonadati</taxon>
        <taxon>Chlorobiota</taxon>
        <taxon>Chlorobiia</taxon>
        <taxon>Chlorobiales</taxon>
        <taxon>Chlorobiaceae</taxon>
        <taxon>Chlorobium/Pelodictyon group</taxon>
        <taxon>Pelodictyon</taxon>
    </lineage>
</organism>
<evidence type="ECO:0000255" key="1">
    <source>
        <dbReference type="HAMAP-Rule" id="MF_01309"/>
    </source>
</evidence>
<evidence type="ECO:0000256" key="2">
    <source>
        <dbReference type="SAM" id="MobiDB-lite"/>
    </source>
</evidence>
<evidence type="ECO:0000305" key="3"/>
<proteinExistence type="inferred from homology"/>
<dbReference type="EMBL" id="CP000096">
    <property type="protein sequence ID" value="ABB23075.1"/>
    <property type="molecule type" value="Genomic_DNA"/>
</dbReference>
<dbReference type="RefSeq" id="WP_011356951.1">
    <property type="nucleotide sequence ID" value="NC_007512.1"/>
</dbReference>
<dbReference type="SMR" id="Q3B6F6"/>
<dbReference type="STRING" id="319225.Plut_0187"/>
<dbReference type="KEGG" id="plt:Plut_0187"/>
<dbReference type="eggNOG" id="COG0092">
    <property type="taxonomic scope" value="Bacteria"/>
</dbReference>
<dbReference type="HOGENOM" id="CLU_058591_0_2_10"/>
<dbReference type="OrthoDB" id="9806396at2"/>
<dbReference type="Proteomes" id="UP000002709">
    <property type="component" value="Chromosome"/>
</dbReference>
<dbReference type="GO" id="GO:0022627">
    <property type="term" value="C:cytosolic small ribosomal subunit"/>
    <property type="evidence" value="ECO:0007669"/>
    <property type="project" value="TreeGrafter"/>
</dbReference>
<dbReference type="GO" id="GO:0003729">
    <property type="term" value="F:mRNA binding"/>
    <property type="evidence" value="ECO:0007669"/>
    <property type="project" value="UniProtKB-UniRule"/>
</dbReference>
<dbReference type="GO" id="GO:0019843">
    <property type="term" value="F:rRNA binding"/>
    <property type="evidence" value="ECO:0007669"/>
    <property type="project" value="UniProtKB-UniRule"/>
</dbReference>
<dbReference type="GO" id="GO:0003735">
    <property type="term" value="F:structural constituent of ribosome"/>
    <property type="evidence" value="ECO:0007669"/>
    <property type="project" value="InterPro"/>
</dbReference>
<dbReference type="GO" id="GO:0006412">
    <property type="term" value="P:translation"/>
    <property type="evidence" value="ECO:0007669"/>
    <property type="project" value="UniProtKB-UniRule"/>
</dbReference>
<dbReference type="CDD" id="cd02412">
    <property type="entry name" value="KH-II_30S_S3"/>
    <property type="match status" value="1"/>
</dbReference>
<dbReference type="FunFam" id="3.30.300.20:FF:000001">
    <property type="entry name" value="30S ribosomal protein S3"/>
    <property type="match status" value="1"/>
</dbReference>
<dbReference type="Gene3D" id="3.30.300.20">
    <property type="match status" value="1"/>
</dbReference>
<dbReference type="Gene3D" id="3.30.1140.32">
    <property type="entry name" value="Ribosomal protein S3, C-terminal domain"/>
    <property type="match status" value="1"/>
</dbReference>
<dbReference type="HAMAP" id="MF_01309_B">
    <property type="entry name" value="Ribosomal_uS3_B"/>
    <property type="match status" value="1"/>
</dbReference>
<dbReference type="InterPro" id="IPR004087">
    <property type="entry name" value="KH_dom"/>
</dbReference>
<dbReference type="InterPro" id="IPR015946">
    <property type="entry name" value="KH_dom-like_a/b"/>
</dbReference>
<dbReference type="InterPro" id="IPR004044">
    <property type="entry name" value="KH_dom_type_2"/>
</dbReference>
<dbReference type="InterPro" id="IPR009019">
    <property type="entry name" value="KH_sf_prok-type"/>
</dbReference>
<dbReference type="InterPro" id="IPR036419">
    <property type="entry name" value="Ribosomal_S3_C_sf"/>
</dbReference>
<dbReference type="InterPro" id="IPR005704">
    <property type="entry name" value="Ribosomal_uS3_bac-typ"/>
</dbReference>
<dbReference type="InterPro" id="IPR001351">
    <property type="entry name" value="Ribosomal_uS3_C"/>
</dbReference>
<dbReference type="InterPro" id="IPR018280">
    <property type="entry name" value="Ribosomal_uS3_CS"/>
</dbReference>
<dbReference type="NCBIfam" id="TIGR01009">
    <property type="entry name" value="rpsC_bact"/>
    <property type="match status" value="1"/>
</dbReference>
<dbReference type="PANTHER" id="PTHR11760">
    <property type="entry name" value="30S/40S RIBOSOMAL PROTEIN S3"/>
    <property type="match status" value="1"/>
</dbReference>
<dbReference type="PANTHER" id="PTHR11760:SF19">
    <property type="entry name" value="SMALL RIBOSOMAL SUBUNIT PROTEIN US3C"/>
    <property type="match status" value="1"/>
</dbReference>
<dbReference type="Pfam" id="PF07650">
    <property type="entry name" value="KH_2"/>
    <property type="match status" value="1"/>
</dbReference>
<dbReference type="Pfam" id="PF00189">
    <property type="entry name" value="Ribosomal_S3_C"/>
    <property type="match status" value="1"/>
</dbReference>
<dbReference type="SMART" id="SM00322">
    <property type="entry name" value="KH"/>
    <property type="match status" value="1"/>
</dbReference>
<dbReference type="SUPFAM" id="SSF54814">
    <property type="entry name" value="Prokaryotic type KH domain (KH-domain type II)"/>
    <property type="match status" value="1"/>
</dbReference>
<dbReference type="SUPFAM" id="SSF54821">
    <property type="entry name" value="Ribosomal protein S3 C-terminal domain"/>
    <property type="match status" value="1"/>
</dbReference>
<dbReference type="PROSITE" id="PS50823">
    <property type="entry name" value="KH_TYPE_2"/>
    <property type="match status" value="1"/>
</dbReference>
<dbReference type="PROSITE" id="PS00548">
    <property type="entry name" value="RIBOSOMAL_S3"/>
    <property type="match status" value="1"/>
</dbReference>
<feature type="chain" id="PRO_0000230712" description="Small ribosomal subunit protein uS3">
    <location>
        <begin position="1"/>
        <end position="252"/>
    </location>
</feature>
<feature type="domain" description="KH type-2" evidence="1">
    <location>
        <begin position="39"/>
        <end position="109"/>
    </location>
</feature>
<feature type="region of interest" description="Disordered" evidence="2">
    <location>
        <begin position="221"/>
        <end position="252"/>
    </location>
</feature>
<feature type="compositionally biased region" description="Basic and acidic residues" evidence="2">
    <location>
        <begin position="221"/>
        <end position="241"/>
    </location>
</feature>
<feature type="compositionally biased region" description="Basic residues" evidence="2">
    <location>
        <begin position="242"/>
        <end position="252"/>
    </location>
</feature>